<comment type="function">
    <text evidence="2">NQR complex catalyzes the reduction of ubiquinone-1 to ubiquinol by two successive reactions, coupled with the transport of Na(+) ions from the cytoplasm to the periplasm. The first step is catalyzed by NqrF, which accepts electrons from NADH and reduces ubiquinone-1 to ubisemiquinone by a one-electron transfer pathway.</text>
</comment>
<comment type="catalytic activity">
    <reaction evidence="2">
        <text>a ubiquinone + n Na(+)(in) + NADH + H(+) = a ubiquinol + n Na(+)(out) + NAD(+)</text>
        <dbReference type="Rhea" id="RHEA:47748"/>
        <dbReference type="Rhea" id="RHEA-COMP:9565"/>
        <dbReference type="Rhea" id="RHEA-COMP:9566"/>
        <dbReference type="ChEBI" id="CHEBI:15378"/>
        <dbReference type="ChEBI" id="CHEBI:16389"/>
        <dbReference type="ChEBI" id="CHEBI:17976"/>
        <dbReference type="ChEBI" id="CHEBI:29101"/>
        <dbReference type="ChEBI" id="CHEBI:57540"/>
        <dbReference type="ChEBI" id="CHEBI:57945"/>
        <dbReference type="EC" id="7.2.1.1"/>
    </reaction>
</comment>
<comment type="cofactor">
    <cofactor evidence="1">
        <name>[2Fe-2S] cluster</name>
        <dbReference type="ChEBI" id="CHEBI:190135"/>
    </cofactor>
    <text evidence="1">Binds 1 [2Fe-2S] cluster.</text>
</comment>
<comment type="cofactor">
    <cofactor evidence="1">
        <name>FAD</name>
        <dbReference type="ChEBI" id="CHEBI:57692"/>
    </cofactor>
</comment>
<comment type="subunit">
    <text evidence="2">Composed of six subunits; NqrA, NqrB, NqrC, NqrD, NqrE and NqrF.</text>
</comment>
<comment type="subcellular location">
    <subcellularLocation>
        <location evidence="5">Cell inner membrane</location>
    </subcellularLocation>
</comment>
<comment type="similarity">
    <text evidence="5">Belongs to the NqrF family.</text>
</comment>
<keyword id="KW-0001">2Fe-2S</keyword>
<keyword id="KW-0997">Cell inner membrane</keyword>
<keyword id="KW-1003">Cell membrane</keyword>
<keyword id="KW-0274">FAD</keyword>
<keyword id="KW-0285">Flavoprotein</keyword>
<keyword id="KW-0406">Ion transport</keyword>
<keyword id="KW-0408">Iron</keyword>
<keyword id="KW-0411">Iron-sulfur</keyword>
<keyword id="KW-0472">Membrane</keyword>
<keyword id="KW-0479">Metal-binding</keyword>
<keyword id="KW-0520">NAD</keyword>
<keyword id="KW-0915">Sodium</keyword>
<keyword id="KW-0739">Sodium transport</keyword>
<keyword id="KW-1278">Translocase</keyword>
<keyword id="KW-0813">Transport</keyword>
<keyword id="KW-0830">Ubiquinone</keyword>
<evidence type="ECO:0000250" key="1">
    <source>
        <dbReference type="UniProtKB" id="A5F5Y4"/>
    </source>
</evidence>
<evidence type="ECO:0000250" key="2">
    <source>
        <dbReference type="UniProtKB" id="Q56584"/>
    </source>
</evidence>
<evidence type="ECO:0000255" key="3">
    <source>
        <dbReference type="PROSITE-ProRule" id="PRU00465"/>
    </source>
</evidence>
<evidence type="ECO:0000255" key="4">
    <source>
        <dbReference type="PROSITE-ProRule" id="PRU00716"/>
    </source>
</evidence>
<evidence type="ECO:0000305" key="5"/>
<organism>
    <name type="scientific">Photobacterium phosphoreum</name>
    <dbReference type="NCBI Taxonomy" id="659"/>
    <lineage>
        <taxon>Bacteria</taxon>
        <taxon>Pseudomonadati</taxon>
        <taxon>Pseudomonadota</taxon>
        <taxon>Gammaproteobacteria</taxon>
        <taxon>Vibrionales</taxon>
        <taxon>Vibrionaceae</taxon>
        <taxon>Photobacterium</taxon>
    </lineage>
</organism>
<protein>
    <recommendedName>
        <fullName>Na(+)-translocating NADH-quinone reductase subunit F</fullName>
        <shortName>Na(+)-NQR subunit F</shortName>
        <shortName>Na(+)-translocating NQR subunit F</shortName>
        <ecNumber evidence="2">7.2.1.1</ecNumber>
    </recommendedName>
    <alternativeName>
        <fullName>NQR complex subunit F</fullName>
    </alternativeName>
    <alternativeName>
        <fullName>NQR-1 subunit F</fullName>
    </alternativeName>
</protein>
<reference key="1">
    <citation type="journal article" date="2000" name="Can. J. Microbiol.">
        <title>Detection of the Na(+)-translocating NADH-quinone reductase in marine bacteria using a PCR technique.</title>
        <authorList>
            <person name="Kato S."/>
            <person name="Yumoto I."/>
        </authorList>
    </citation>
    <scope>NUCLEOTIDE SEQUENCE [GENOMIC DNA]</scope>
    <source>
        <strain>JCM 20393 / IAM 12085 / CI-4</strain>
    </source>
</reference>
<proteinExistence type="inferred from homology"/>
<feature type="chain" id="PRO_0000074500" description="Na(+)-translocating NADH-quinone reductase subunit F">
    <location>
        <begin position="1" status="less than"/>
        <end position="303" status="greater than"/>
    </location>
</feature>
<feature type="domain" description="2Fe-2S ferredoxin-type" evidence="3">
    <location>
        <begin position="1" status="less than"/>
        <end position="55"/>
    </location>
</feature>
<feature type="domain" description="FAD-binding FR-type" evidence="4">
    <location>
        <begin position="58"/>
        <end position="198"/>
    </location>
</feature>
<feature type="region of interest" description="Catalytic">
    <location>
        <begin position="201"/>
        <end position="303" status="greater than"/>
    </location>
</feature>
<feature type="binding site" evidence="3">
    <location>
        <position position="4"/>
    </location>
    <ligand>
        <name>[2Fe-2S] cluster</name>
        <dbReference type="ChEBI" id="CHEBI:190135"/>
    </ligand>
</feature>
<feature type="binding site" evidence="3">
    <location>
        <position position="7"/>
    </location>
    <ligand>
        <name>[2Fe-2S] cluster</name>
        <dbReference type="ChEBI" id="CHEBI:190135"/>
    </ligand>
</feature>
<feature type="binding site" evidence="3">
    <location>
        <position position="39"/>
    </location>
    <ligand>
        <name>[2Fe-2S] cluster</name>
        <dbReference type="ChEBI" id="CHEBI:190135"/>
    </ligand>
</feature>
<feature type="non-terminal residue">
    <location>
        <position position="1"/>
    </location>
</feature>
<feature type="non-terminal residue">
    <location>
        <position position="303"/>
    </location>
</feature>
<name>NQRF_PHOPO</name>
<gene>
    <name type="primary">nqrF</name>
    <name type="synonym">nqr6</name>
</gene>
<dbReference type="EC" id="7.2.1.1" evidence="2"/>
<dbReference type="EMBL" id="AB024724">
    <property type="protein sequence ID" value="BAA83761.1"/>
    <property type="molecule type" value="Genomic_DNA"/>
</dbReference>
<dbReference type="SMR" id="Q9LCJ1"/>
<dbReference type="STRING" id="659.AYY26_05535"/>
<dbReference type="GO" id="GO:0005886">
    <property type="term" value="C:plasma membrane"/>
    <property type="evidence" value="ECO:0007669"/>
    <property type="project" value="UniProtKB-SubCell"/>
</dbReference>
<dbReference type="GO" id="GO:0051537">
    <property type="term" value="F:2 iron, 2 sulfur cluster binding"/>
    <property type="evidence" value="ECO:0007669"/>
    <property type="project" value="UniProtKB-KW"/>
</dbReference>
<dbReference type="GO" id="GO:0046872">
    <property type="term" value="F:metal ion binding"/>
    <property type="evidence" value="ECO:0007669"/>
    <property type="project" value="UniProtKB-KW"/>
</dbReference>
<dbReference type="GO" id="GO:0016655">
    <property type="term" value="F:oxidoreductase activity, acting on NAD(P)H, quinone or similar compound as acceptor"/>
    <property type="evidence" value="ECO:0007669"/>
    <property type="project" value="InterPro"/>
</dbReference>
<dbReference type="GO" id="GO:0006814">
    <property type="term" value="P:sodium ion transport"/>
    <property type="evidence" value="ECO:0007669"/>
    <property type="project" value="UniProtKB-KW"/>
</dbReference>
<dbReference type="CDD" id="cd00207">
    <property type="entry name" value="fer2"/>
    <property type="match status" value="1"/>
</dbReference>
<dbReference type="CDD" id="cd06188">
    <property type="entry name" value="NADH_quinone_reductase"/>
    <property type="match status" value="1"/>
</dbReference>
<dbReference type="FunFam" id="2.40.30.10:FF:000064">
    <property type="entry name" value="Na(+)-translocating NADH-quinone reductase subunit F"/>
    <property type="match status" value="1"/>
</dbReference>
<dbReference type="FunFam" id="3.40.50.80:FF:000014">
    <property type="entry name" value="Na(+)-translocating NADH-quinone reductase subunit F"/>
    <property type="match status" value="1"/>
</dbReference>
<dbReference type="Gene3D" id="3.10.20.30">
    <property type="match status" value="1"/>
</dbReference>
<dbReference type="Gene3D" id="3.40.50.80">
    <property type="entry name" value="Nucleotide-binding domain of ferredoxin-NADP reductase (FNR) module"/>
    <property type="match status" value="1"/>
</dbReference>
<dbReference type="Gene3D" id="2.40.30.10">
    <property type="entry name" value="Translation factors"/>
    <property type="match status" value="1"/>
</dbReference>
<dbReference type="InterPro" id="IPR036010">
    <property type="entry name" value="2Fe-2S_ferredoxin-like_sf"/>
</dbReference>
<dbReference type="InterPro" id="IPR001041">
    <property type="entry name" value="2Fe-2S_ferredoxin-type"/>
</dbReference>
<dbReference type="InterPro" id="IPR012675">
    <property type="entry name" value="Beta-grasp_dom_sf"/>
</dbReference>
<dbReference type="InterPro" id="IPR008333">
    <property type="entry name" value="Cbr1-like_FAD-bd_dom"/>
</dbReference>
<dbReference type="InterPro" id="IPR017927">
    <property type="entry name" value="FAD-bd_FR_type"/>
</dbReference>
<dbReference type="InterPro" id="IPR039261">
    <property type="entry name" value="FNR_nucleotide-bd"/>
</dbReference>
<dbReference type="InterPro" id="IPR010205">
    <property type="entry name" value="NqrF"/>
</dbReference>
<dbReference type="InterPro" id="IPR001433">
    <property type="entry name" value="OxRdtase_FAD/NAD-bd"/>
</dbReference>
<dbReference type="InterPro" id="IPR017938">
    <property type="entry name" value="Riboflavin_synthase-like_b-brl"/>
</dbReference>
<dbReference type="NCBIfam" id="TIGR01941">
    <property type="entry name" value="nqrF"/>
    <property type="match status" value="1"/>
</dbReference>
<dbReference type="PANTHER" id="PTHR43644">
    <property type="entry name" value="NA(+)-TRANSLOCATING NADH-QUINONE REDUCTASE SUBUNIT"/>
    <property type="match status" value="1"/>
</dbReference>
<dbReference type="PANTHER" id="PTHR43644:SF1">
    <property type="entry name" value="NAD(P)H-FLAVIN REDUCTASE"/>
    <property type="match status" value="1"/>
</dbReference>
<dbReference type="Pfam" id="PF00970">
    <property type="entry name" value="FAD_binding_6"/>
    <property type="match status" value="1"/>
</dbReference>
<dbReference type="Pfam" id="PF00175">
    <property type="entry name" value="NAD_binding_1"/>
    <property type="match status" value="1"/>
</dbReference>
<dbReference type="SUPFAM" id="SSF54292">
    <property type="entry name" value="2Fe-2S ferredoxin-like"/>
    <property type="match status" value="1"/>
</dbReference>
<dbReference type="SUPFAM" id="SSF52343">
    <property type="entry name" value="Ferredoxin reductase-like, C-terminal NADP-linked domain"/>
    <property type="match status" value="1"/>
</dbReference>
<dbReference type="SUPFAM" id="SSF63380">
    <property type="entry name" value="Riboflavin synthase domain-like"/>
    <property type="match status" value="1"/>
</dbReference>
<dbReference type="PROSITE" id="PS51085">
    <property type="entry name" value="2FE2S_FER_2"/>
    <property type="match status" value="1"/>
</dbReference>
<dbReference type="PROSITE" id="PS51384">
    <property type="entry name" value="FAD_FR"/>
    <property type="match status" value="1"/>
</dbReference>
<sequence>GGSCGQCRVKVKSGGGDILPTELDHISKGEAREGERLACQVNVKSDMDIELPEEIFGVKKWECSVISNDNKATFIKELKLQIPDGETVPFRAGGYIQIEAPAHHIKYSDFDVPEEYRGDWDKFNLFRYESKVDEDIIRAYSMANYPEEFGIIMLNVRIATPPPNNPDVAPGQMSSFIWSLKEGDKCTISGPFGEFFAKDTDNEMVFVGGGAGMAPMRSHIFDQLKRLHSKRKMSYWYGARSKREMFYEEDFDALAAENPNFVWHCALSDPQPEDNWDGYTGFIHNVLYENYLRDHEAPEDCEY</sequence>
<accession>Q9LCJ1</accession>